<organism>
    <name type="scientific">Histophilus somni (strain 2336)</name>
    <name type="common">Haemophilus somnus</name>
    <dbReference type="NCBI Taxonomy" id="228400"/>
    <lineage>
        <taxon>Bacteria</taxon>
        <taxon>Pseudomonadati</taxon>
        <taxon>Pseudomonadota</taxon>
        <taxon>Gammaproteobacteria</taxon>
        <taxon>Pasteurellales</taxon>
        <taxon>Pasteurellaceae</taxon>
        <taxon>Histophilus</taxon>
    </lineage>
</organism>
<comment type="function">
    <text evidence="1">Involved in peptide bond synthesis. Alleviates ribosome stalling that occurs when 3 or more consecutive Pro residues or the sequence PPG is present in a protein, possibly by augmenting the peptidyl transferase activity of the ribosome. Modification of Lys-34 is required for alleviation.</text>
</comment>
<comment type="pathway">
    <text evidence="1">Protein biosynthesis; polypeptide chain elongation.</text>
</comment>
<comment type="subcellular location">
    <subcellularLocation>
        <location evidence="1">Cytoplasm</location>
    </subcellularLocation>
</comment>
<comment type="PTM">
    <text evidence="1">May be beta-lysylated on the epsilon-amino group of Lys-34 by the combined action of EpmA and EpmB, and then hydroxylated on the C5 position of the same residue by EpmC (if this protein is present). Lysylation is critical for the stimulatory effect of EF-P on peptide-bond formation. The lysylation moiety may extend toward the peptidyltransferase center and stabilize the terminal 3-CCA end of the tRNA. Hydroxylation of the C5 position on Lys-34 may allow additional potential stabilizing hydrogen-bond interactions with the P-tRNA.</text>
</comment>
<comment type="similarity">
    <text evidence="1">Belongs to the elongation factor P family.</text>
</comment>
<sequence>MATYTTSDFKPGLKFMQDGEPCVIIENEFVKPGKGQAFTRTRIRKLISGKVLDVNFKSGTSVEAADVMDLNLTYSYKDEAFWYFMHPETFEQYSADAKAVGDAEKWLLDQADCIVTLWNGAPITITPPNFVELEVVETDPGLKGDTAGTGGKPATLSTGAVVKVPLFVQIGEVIKVDTRSGEYVSRVK</sequence>
<keyword id="KW-0963">Cytoplasm</keyword>
<keyword id="KW-0251">Elongation factor</keyword>
<keyword id="KW-0379">Hydroxylation</keyword>
<keyword id="KW-0648">Protein biosynthesis</keyword>
<feature type="chain" id="PRO_1000076517" description="Elongation factor P">
    <location>
        <begin position="1"/>
        <end position="188"/>
    </location>
</feature>
<feature type="modified residue" description="N6-(3,6-diaminohexanoyl)-5-hydroxylysine" evidence="1">
    <location>
        <position position="34"/>
    </location>
</feature>
<proteinExistence type="inferred from homology"/>
<gene>
    <name evidence="1" type="primary">efp</name>
    <name type="ordered locus">HSM_0329</name>
</gene>
<name>EFP_HISS2</name>
<accession>B0UWM5</accession>
<protein>
    <recommendedName>
        <fullName evidence="1">Elongation factor P</fullName>
        <shortName evidence="1">EF-P</shortName>
    </recommendedName>
</protein>
<dbReference type="EMBL" id="CP000947">
    <property type="protein sequence ID" value="ACA31962.1"/>
    <property type="molecule type" value="Genomic_DNA"/>
</dbReference>
<dbReference type="RefSeq" id="WP_011609443.1">
    <property type="nucleotide sequence ID" value="NC_010519.1"/>
</dbReference>
<dbReference type="SMR" id="B0UWM5"/>
<dbReference type="STRING" id="228400.HSM_0329"/>
<dbReference type="GeneID" id="31486609"/>
<dbReference type="KEGG" id="hsm:HSM_0329"/>
<dbReference type="HOGENOM" id="CLU_074944_0_0_6"/>
<dbReference type="UniPathway" id="UPA00345"/>
<dbReference type="GO" id="GO:0005737">
    <property type="term" value="C:cytoplasm"/>
    <property type="evidence" value="ECO:0007669"/>
    <property type="project" value="UniProtKB-SubCell"/>
</dbReference>
<dbReference type="GO" id="GO:0003746">
    <property type="term" value="F:translation elongation factor activity"/>
    <property type="evidence" value="ECO:0007669"/>
    <property type="project" value="UniProtKB-UniRule"/>
</dbReference>
<dbReference type="GO" id="GO:0043043">
    <property type="term" value="P:peptide biosynthetic process"/>
    <property type="evidence" value="ECO:0007669"/>
    <property type="project" value="InterPro"/>
</dbReference>
<dbReference type="CDD" id="cd04470">
    <property type="entry name" value="S1_EF-P_repeat_1"/>
    <property type="match status" value="1"/>
</dbReference>
<dbReference type="CDD" id="cd05794">
    <property type="entry name" value="S1_EF-P_repeat_2"/>
    <property type="match status" value="1"/>
</dbReference>
<dbReference type="FunFam" id="2.30.30.30:FF:000003">
    <property type="entry name" value="Elongation factor P"/>
    <property type="match status" value="1"/>
</dbReference>
<dbReference type="FunFam" id="2.40.50.140:FF:000004">
    <property type="entry name" value="Elongation factor P"/>
    <property type="match status" value="1"/>
</dbReference>
<dbReference type="FunFam" id="2.40.50.140:FF:000009">
    <property type="entry name" value="Elongation factor P"/>
    <property type="match status" value="1"/>
</dbReference>
<dbReference type="Gene3D" id="2.30.30.30">
    <property type="match status" value="1"/>
</dbReference>
<dbReference type="Gene3D" id="2.40.50.140">
    <property type="entry name" value="Nucleic acid-binding proteins"/>
    <property type="match status" value="2"/>
</dbReference>
<dbReference type="HAMAP" id="MF_00141">
    <property type="entry name" value="EF_P"/>
    <property type="match status" value="1"/>
</dbReference>
<dbReference type="InterPro" id="IPR015365">
    <property type="entry name" value="Elong-fact-P_C"/>
</dbReference>
<dbReference type="InterPro" id="IPR012340">
    <property type="entry name" value="NA-bd_OB-fold"/>
</dbReference>
<dbReference type="InterPro" id="IPR014722">
    <property type="entry name" value="Rib_uL2_dom2"/>
</dbReference>
<dbReference type="InterPro" id="IPR020599">
    <property type="entry name" value="Transl_elong_fac_P/YeiP"/>
</dbReference>
<dbReference type="InterPro" id="IPR013185">
    <property type="entry name" value="Transl_elong_KOW-like"/>
</dbReference>
<dbReference type="InterPro" id="IPR001059">
    <property type="entry name" value="Transl_elong_P/YeiP_cen"/>
</dbReference>
<dbReference type="InterPro" id="IPR013852">
    <property type="entry name" value="Transl_elong_P/YeiP_CS"/>
</dbReference>
<dbReference type="InterPro" id="IPR011768">
    <property type="entry name" value="Transl_elongation_fac_P"/>
</dbReference>
<dbReference type="InterPro" id="IPR008991">
    <property type="entry name" value="Translation_prot_SH3-like_sf"/>
</dbReference>
<dbReference type="NCBIfam" id="TIGR00038">
    <property type="entry name" value="efp"/>
    <property type="match status" value="1"/>
</dbReference>
<dbReference type="NCBIfam" id="NF001810">
    <property type="entry name" value="PRK00529.1"/>
    <property type="match status" value="1"/>
</dbReference>
<dbReference type="PANTHER" id="PTHR30053">
    <property type="entry name" value="ELONGATION FACTOR P"/>
    <property type="match status" value="1"/>
</dbReference>
<dbReference type="PANTHER" id="PTHR30053:SF12">
    <property type="entry name" value="ELONGATION FACTOR P (EF-P) FAMILY PROTEIN"/>
    <property type="match status" value="1"/>
</dbReference>
<dbReference type="Pfam" id="PF01132">
    <property type="entry name" value="EFP"/>
    <property type="match status" value="1"/>
</dbReference>
<dbReference type="Pfam" id="PF08207">
    <property type="entry name" value="EFP_N"/>
    <property type="match status" value="1"/>
</dbReference>
<dbReference type="Pfam" id="PF09285">
    <property type="entry name" value="Elong-fact-P_C"/>
    <property type="match status" value="1"/>
</dbReference>
<dbReference type="PIRSF" id="PIRSF005901">
    <property type="entry name" value="EF-P"/>
    <property type="match status" value="1"/>
</dbReference>
<dbReference type="SMART" id="SM01185">
    <property type="entry name" value="EFP"/>
    <property type="match status" value="1"/>
</dbReference>
<dbReference type="SMART" id="SM00841">
    <property type="entry name" value="Elong-fact-P_C"/>
    <property type="match status" value="1"/>
</dbReference>
<dbReference type="SUPFAM" id="SSF50249">
    <property type="entry name" value="Nucleic acid-binding proteins"/>
    <property type="match status" value="2"/>
</dbReference>
<dbReference type="SUPFAM" id="SSF50104">
    <property type="entry name" value="Translation proteins SH3-like domain"/>
    <property type="match status" value="1"/>
</dbReference>
<dbReference type="PROSITE" id="PS01275">
    <property type="entry name" value="EFP"/>
    <property type="match status" value="1"/>
</dbReference>
<reference key="1">
    <citation type="submission" date="2008-02" db="EMBL/GenBank/DDBJ databases">
        <title>Complete sequence of Haemophilus somnus 2336.</title>
        <authorList>
            <consortium name="US DOE Joint Genome Institute"/>
            <person name="Siddaramappa S."/>
            <person name="Duncan A.J."/>
            <person name="Challacombe J.F."/>
            <person name="Rainey D."/>
            <person name="Gillaspy A.F."/>
            <person name="Carson M."/>
            <person name="Gipson J."/>
            <person name="Gipson M."/>
            <person name="Bruce D."/>
            <person name="Detter J.C."/>
            <person name="Han C.S."/>
            <person name="Land M."/>
            <person name="Tapia R."/>
            <person name="Thompson L.S."/>
            <person name="Orvis J."/>
            <person name="Zaitshik J."/>
            <person name="Barnes G."/>
            <person name="Brettin T.S."/>
            <person name="Dyer D.W."/>
            <person name="Inzana T.J."/>
        </authorList>
    </citation>
    <scope>NUCLEOTIDE SEQUENCE [LARGE SCALE GENOMIC DNA]</scope>
    <source>
        <strain>2336</strain>
    </source>
</reference>
<evidence type="ECO:0000255" key="1">
    <source>
        <dbReference type="HAMAP-Rule" id="MF_00141"/>
    </source>
</evidence>